<proteinExistence type="inferred from homology"/>
<organism>
    <name type="scientific">Aspergillus oryzae (strain ATCC 42149 / RIB 40)</name>
    <name type="common">Yellow koji mold</name>
    <dbReference type="NCBI Taxonomy" id="510516"/>
    <lineage>
        <taxon>Eukaryota</taxon>
        <taxon>Fungi</taxon>
        <taxon>Dikarya</taxon>
        <taxon>Ascomycota</taxon>
        <taxon>Pezizomycotina</taxon>
        <taxon>Eurotiomycetes</taxon>
        <taxon>Eurotiomycetidae</taxon>
        <taxon>Eurotiales</taxon>
        <taxon>Aspergillaceae</taxon>
        <taxon>Aspergillus</taxon>
        <taxon>Aspergillus subgen. Circumdati</taxon>
    </lineage>
</organism>
<keyword id="KW-0010">Activator</keyword>
<keyword id="KW-0067">ATP-binding</keyword>
<keyword id="KW-0175">Coiled coil</keyword>
<keyword id="KW-0227">DNA damage</keyword>
<keyword id="KW-0234">DNA repair</keyword>
<keyword id="KW-0238">DNA-binding</keyword>
<keyword id="KW-0378">Hydrolase</keyword>
<keyword id="KW-0547">Nucleotide-binding</keyword>
<keyword id="KW-0539">Nucleus</keyword>
<keyword id="KW-1185">Reference proteome</keyword>
<keyword id="KW-0804">Transcription</keyword>
<keyword id="KW-0805">Transcription regulation</keyword>
<feature type="chain" id="PRO_0000350956" description="Chromatin-remodeling ATPase INO80">
    <location>
        <begin position="1"/>
        <end position="1444"/>
    </location>
</feature>
<feature type="domain" description="DBINO" evidence="6">
    <location>
        <begin position="398"/>
        <end position="523"/>
    </location>
</feature>
<feature type="domain" description="Helicase ATP-binding" evidence="4">
    <location>
        <begin position="645"/>
        <end position="817"/>
    </location>
</feature>
<feature type="domain" description="Helicase C-terminal" evidence="5">
    <location>
        <begin position="1220"/>
        <end position="1380"/>
    </location>
</feature>
<feature type="region of interest" description="Disordered" evidence="7">
    <location>
        <begin position="1"/>
        <end position="115"/>
    </location>
</feature>
<feature type="region of interest" description="Disordered" evidence="7">
    <location>
        <begin position="215"/>
        <end position="238"/>
    </location>
</feature>
<feature type="region of interest" description="Disordered" evidence="7">
    <location>
        <begin position="269"/>
        <end position="384"/>
    </location>
</feature>
<feature type="region of interest" description="Disordered" evidence="7">
    <location>
        <begin position="432"/>
        <end position="454"/>
    </location>
</feature>
<feature type="region of interest" description="Disordered" evidence="7">
    <location>
        <begin position="524"/>
        <end position="551"/>
    </location>
</feature>
<feature type="coiled-coil region" evidence="3">
    <location>
        <begin position="207"/>
        <end position="283"/>
    </location>
</feature>
<feature type="coiled-coil region" evidence="3">
    <location>
        <begin position="440"/>
        <end position="511"/>
    </location>
</feature>
<feature type="short sequence motif" description="DEAQ box">
    <location>
        <begin position="768"/>
        <end position="771"/>
    </location>
</feature>
<feature type="compositionally biased region" description="Polar residues" evidence="7">
    <location>
        <begin position="29"/>
        <end position="41"/>
    </location>
</feature>
<feature type="compositionally biased region" description="Basic and acidic residues" evidence="7">
    <location>
        <begin position="55"/>
        <end position="85"/>
    </location>
</feature>
<feature type="compositionally biased region" description="Polar residues" evidence="7">
    <location>
        <begin position="101"/>
        <end position="110"/>
    </location>
</feature>
<feature type="compositionally biased region" description="Basic and acidic residues" evidence="7">
    <location>
        <begin position="329"/>
        <end position="340"/>
    </location>
</feature>
<feature type="compositionally biased region" description="Basic and acidic residues" evidence="7">
    <location>
        <begin position="357"/>
        <end position="377"/>
    </location>
</feature>
<feature type="compositionally biased region" description="Basic and acidic residues" evidence="7">
    <location>
        <begin position="438"/>
        <end position="452"/>
    </location>
</feature>
<feature type="binding site" evidence="4">
    <location>
        <begin position="658"/>
        <end position="665"/>
    </location>
    <ligand>
        <name>ATP</name>
        <dbReference type="ChEBI" id="CHEBI:30616"/>
    </ligand>
</feature>
<comment type="function">
    <text evidence="6">ATPase component of the INO80 complex which remodels chromatin by shifting nucleosomes and is involved in DNA repair.</text>
</comment>
<comment type="catalytic activity">
    <reaction evidence="1">
        <text>ATP + H2O = ADP + phosphate + H(+)</text>
        <dbReference type="Rhea" id="RHEA:13065"/>
        <dbReference type="ChEBI" id="CHEBI:15377"/>
        <dbReference type="ChEBI" id="CHEBI:15378"/>
        <dbReference type="ChEBI" id="CHEBI:30616"/>
        <dbReference type="ChEBI" id="CHEBI:43474"/>
        <dbReference type="ChEBI" id="CHEBI:456216"/>
    </reaction>
</comment>
<comment type="subunit">
    <text evidence="6">Component of the INO80 chromatin-remodeling complex.</text>
</comment>
<comment type="subcellular location">
    <subcellularLocation>
        <location evidence="6">Nucleus</location>
    </subcellularLocation>
</comment>
<comment type="domain">
    <text evidence="2">The DBINO region is involved in binding to DNA.</text>
</comment>
<comment type="similarity">
    <text evidence="8">Belongs to the SNF2/RAD54 helicase family.</text>
</comment>
<protein>
    <recommendedName>
        <fullName evidence="1">Chromatin-remodeling ATPase INO80</fullName>
        <ecNumber evidence="1">3.6.4.-</ecNumber>
    </recommendedName>
</protein>
<evidence type="ECO:0000250" key="1">
    <source>
        <dbReference type="UniProtKB" id="P53115"/>
    </source>
</evidence>
<evidence type="ECO:0000250" key="2">
    <source>
        <dbReference type="UniProtKB" id="Q9ULG1"/>
    </source>
</evidence>
<evidence type="ECO:0000255" key="3"/>
<evidence type="ECO:0000255" key="4">
    <source>
        <dbReference type="PROSITE-ProRule" id="PRU00541"/>
    </source>
</evidence>
<evidence type="ECO:0000255" key="5">
    <source>
        <dbReference type="PROSITE-ProRule" id="PRU00542"/>
    </source>
</evidence>
<evidence type="ECO:0000255" key="6">
    <source>
        <dbReference type="PROSITE-ProRule" id="PRU00746"/>
    </source>
</evidence>
<evidence type="ECO:0000256" key="7">
    <source>
        <dbReference type="SAM" id="MobiDB-lite"/>
    </source>
</evidence>
<evidence type="ECO:0000305" key="8"/>
<accession>Q2UTQ9</accession>
<sequence length="1444" mass="164774">MSFASILSGPAEERSPPKRQSPPPETTPAPVTSTPREATQLSPPPPPHVPPSHQKVKEQEQVLPRLEKKPSSEKRRRNAEQDNKAGEPSNGILSNGIPEPTKTTTQSWSFLSPRKVLSERESETINKLMVEIDNAEKSDVEAPGFEEEYEQYKLQCKRRALHTLKEEGIKRKRRRNTFLVNLGKSLEKQASAGMDRFRIANEASVISEVQAKEIQDEKERKKDMQRKRRRENTVRLEMQKKLEAERKANKAQDSAEKAKFLREAERAQRKIKTTKRALEGVTAPEEIGEVTPLAPNLEGGTTSSFHIGRSSPSRRKSGRGGPVTRPKKSKEQKQAEKDAAEAAYAAMENDEPLPLAPKEDPRKESLKKEAKGSRSKESSPAPLSAFETKGYNQIYEQIWRDIARKDIPKVYRIKALSLSTRQENLRKTAQLASKQSRKWQERTNKSMKDTQARAKRTMREMMSFWKRNEREERDLRRLAERQEIESAKKAEAEREANRQRRKLNFLISQTELYSHFIGRKIKGAEGDSGDTAVEGSDETVQPGKDEEHAMEDAGAKVTNFEDLDFDAEDETALRQAAMANAQNAVKEAQDRARAFNDGQDHMAALDEGELNFQNPTSLGDIEISQPTMLTAKLKEYQLKGLNWLVNLYEQGINGILADEMGLGKTIQSISVMAYLAEVHNIWGPFLVIAPASTLHNWQQEITKFVPDIKVLPYWGSAKDRKILRKFWDRKHITYTKESEFHVLVTSYQLVVLDAQYFQKVKWQYMILDEAQAIKSSQSSRWKNLLGFSCRNRLLLTGTPIQNNMQELWALLHFIMPTLFDSHDEFSEWFSKDIESHAQSNTKLNEDQLKRLHMILKPFMLRRVKKHVQQELGDKVEKDVFCDLTYRQRAYYTNLRNRVSIMDLIEKAAVGDEADSTTLMNLVMQFRKVCNHPDLFERAETKSPFSVAHFAETASFVREGQNVDVGYSTRNLIEYPLPRLLCGSDGRVDVAGPGNLHAGFRGKYLAHLMNIFAPENIKHSAEHDGTFSFLRFVDTSINEAYEQSHQGIFERAVRRRGKPNRLSRLNVVYDDDKATMASALPHTMFNIVQRNDQHAINDVTTEGYMRELTTVAQSAFERKGLGIIEPCVSPAASAPPITVSSSSRAPLSEMNDSLFNVSVRHALFSTPSKQLEQQILEKKLDPIPYSLPPMLPQPISIKGRYTHIEVPSMRRFVTDSGKLAKLDELLRELKAGGHRVLLYFQMTRMIDLMEEYLTYRNYKYCRLDGSTKLEDRRDTVADFQQRPEIFVFLLSTRAGGLGINLTAADTVIFYDSDWNPTIDSQAMDRAHRLGQTRQVTVYRLITRGTIEERIRKRALQKEEVQRVVISGGAAGGVDFNTRNRESRTKDIAMWLADDEQAELIEQKEKEALDRGEVFGASKGGKKAAQKRKRDITLDDMYHEVSFAIH</sequence>
<name>INO80_ASPOR</name>
<dbReference type="EC" id="3.6.4.-" evidence="1"/>
<dbReference type="EMBL" id="BA000049">
    <property type="protein sequence ID" value="BAE55056.1"/>
    <property type="molecule type" value="Genomic_DNA"/>
</dbReference>
<dbReference type="SMR" id="Q2UTQ9"/>
<dbReference type="STRING" id="510516.Q2UTQ9"/>
<dbReference type="EnsemblFungi" id="BAE55056">
    <property type="protein sequence ID" value="BAE55056"/>
    <property type="gene ID" value="AO090009000631"/>
</dbReference>
<dbReference type="HOGENOM" id="CLU_000315_26_0_1"/>
<dbReference type="Proteomes" id="UP000006564">
    <property type="component" value="Chromosome 1"/>
</dbReference>
<dbReference type="GO" id="GO:0000775">
    <property type="term" value="C:chromosome, centromeric region"/>
    <property type="evidence" value="ECO:0007669"/>
    <property type="project" value="EnsemblFungi"/>
</dbReference>
<dbReference type="GO" id="GO:0000781">
    <property type="term" value="C:chromosome, telomeric region"/>
    <property type="evidence" value="ECO:0007669"/>
    <property type="project" value="GOC"/>
</dbReference>
<dbReference type="GO" id="GO:0031011">
    <property type="term" value="C:Ino80 complex"/>
    <property type="evidence" value="ECO:0007669"/>
    <property type="project" value="EnsemblFungi"/>
</dbReference>
<dbReference type="GO" id="GO:0005524">
    <property type="term" value="F:ATP binding"/>
    <property type="evidence" value="ECO:0007669"/>
    <property type="project" value="UniProtKB-KW"/>
</dbReference>
<dbReference type="GO" id="GO:0016887">
    <property type="term" value="F:ATP hydrolysis activity"/>
    <property type="evidence" value="ECO:0007669"/>
    <property type="project" value="EnsemblFungi"/>
</dbReference>
<dbReference type="GO" id="GO:0140658">
    <property type="term" value="F:ATP-dependent chromatin remodeler activity"/>
    <property type="evidence" value="ECO:0007669"/>
    <property type="project" value="InterPro"/>
</dbReference>
<dbReference type="GO" id="GO:0003677">
    <property type="term" value="F:DNA binding"/>
    <property type="evidence" value="ECO:0007669"/>
    <property type="project" value="UniProtKB-KW"/>
</dbReference>
<dbReference type="GO" id="GO:0042393">
    <property type="term" value="F:histone binding"/>
    <property type="evidence" value="ECO:0007669"/>
    <property type="project" value="TreeGrafter"/>
</dbReference>
<dbReference type="GO" id="GO:0034080">
    <property type="term" value="P:CENP-A containing chromatin assembly"/>
    <property type="evidence" value="ECO:0007669"/>
    <property type="project" value="EnsemblFungi"/>
</dbReference>
<dbReference type="GO" id="GO:0006281">
    <property type="term" value="P:DNA repair"/>
    <property type="evidence" value="ECO:0007669"/>
    <property type="project" value="UniProtKB-KW"/>
</dbReference>
<dbReference type="GO" id="GO:0045944">
    <property type="term" value="P:positive regulation of transcription by RNA polymerase II"/>
    <property type="evidence" value="ECO:0007669"/>
    <property type="project" value="EnsemblFungi"/>
</dbReference>
<dbReference type="GO" id="GO:0032006">
    <property type="term" value="P:regulation of TOR signaling"/>
    <property type="evidence" value="ECO:0007669"/>
    <property type="project" value="EnsemblFungi"/>
</dbReference>
<dbReference type="GO" id="GO:0031509">
    <property type="term" value="P:subtelomeric heterochromatin formation"/>
    <property type="evidence" value="ECO:0007669"/>
    <property type="project" value="EnsemblFungi"/>
</dbReference>
<dbReference type="GO" id="GO:0000722">
    <property type="term" value="P:telomere maintenance via recombination"/>
    <property type="evidence" value="ECO:0007669"/>
    <property type="project" value="EnsemblFungi"/>
</dbReference>
<dbReference type="GO" id="GO:0006366">
    <property type="term" value="P:transcription by RNA polymerase II"/>
    <property type="evidence" value="ECO:0007669"/>
    <property type="project" value="EnsemblFungi"/>
</dbReference>
<dbReference type="CDD" id="cd18002">
    <property type="entry name" value="DEXQc_INO80"/>
    <property type="match status" value="1"/>
</dbReference>
<dbReference type="CDD" id="cd18793">
    <property type="entry name" value="SF2_C_SNF"/>
    <property type="match status" value="1"/>
</dbReference>
<dbReference type="FunFam" id="3.40.50.10810:FF:000006">
    <property type="entry name" value="Putative DNA helicase INO80"/>
    <property type="match status" value="1"/>
</dbReference>
<dbReference type="FunFam" id="3.40.50.300:FF:001269">
    <property type="entry name" value="SNF2 family helicase/ATPase"/>
    <property type="match status" value="1"/>
</dbReference>
<dbReference type="Gene3D" id="3.40.50.300">
    <property type="entry name" value="P-loop containing nucleotide triphosphate hydrolases"/>
    <property type="match status" value="1"/>
</dbReference>
<dbReference type="Gene3D" id="3.40.50.10810">
    <property type="entry name" value="Tandem AAA-ATPase domain"/>
    <property type="match status" value="1"/>
</dbReference>
<dbReference type="InterPro" id="IPR020838">
    <property type="entry name" value="DBINO"/>
</dbReference>
<dbReference type="InterPro" id="IPR031047">
    <property type="entry name" value="DEXQc_INO80"/>
</dbReference>
<dbReference type="InterPro" id="IPR014001">
    <property type="entry name" value="Helicase_ATP-bd"/>
</dbReference>
<dbReference type="InterPro" id="IPR001650">
    <property type="entry name" value="Helicase_C-like"/>
</dbReference>
<dbReference type="InterPro" id="IPR050520">
    <property type="entry name" value="INO80/SWR1_helicase"/>
</dbReference>
<dbReference type="InterPro" id="IPR027417">
    <property type="entry name" value="P-loop_NTPase"/>
</dbReference>
<dbReference type="InterPro" id="IPR038718">
    <property type="entry name" value="SNF2-like_sf"/>
</dbReference>
<dbReference type="InterPro" id="IPR049730">
    <property type="entry name" value="SNF2/RAD54-like_C"/>
</dbReference>
<dbReference type="InterPro" id="IPR000330">
    <property type="entry name" value="SNF2_N"/>
</dbReference>
<dbReference type="PANTHER" id="PTHR45685:SF2">
    <property type="entry name" value="CHROMATIN-REMODELING ATPASE INO80"/>
    <property type="match status" value="1"/>
</dbReference>
<dbReference type="PANTHER" id="PTHR45685">
    <property type="entry name" value="HELICASE SRCAP-RELATED"/>
    <property type="match status" value="1"/>
</dbReference>
<dbReference type="Pfam" id="PF13892">
    <property type="entry name" value="DBINO"/>
    <property type="match status" value="1"/>
</dbReference>
<dbReference type="Pfam" id="PF00271">
    <property type="entry name" value="Helicase_C"/>
    <property type="match status" value="1"/>
</dbReference>
<dbReference type="Pfam" id="PF00176">
    <property type="entry name" value="SNF2-rel_dom"/>
    <property type="match status" value="1"/>
</dbReference>
<dbReference type="SMART" id="SM00487">
    <property type="entry name" value="DEXDc"/>
    <property type="match status" value="1"/>
</dbReference>
<dbReference type="SMART" id="SM00490">
    <property type="entry name" value="HELICc"/>
    <property type="match status" value="1"/>
</dbReference>
<dbReference type="SUPFAM" id="SSF52540">
    <property type="entry name" value="P-loop containing nucleoside triphosphate hydrolases"/>
    <property type="match status" value="2"/>
</dbReference>
<dbReference type="PROSITE" id="PS51413">
    <property type="entry name" value="DBINO"/>
    <property type="match status" value="1"/>
</dbReference>
<dbReference type="PROSITE" id="PS51192">
    <property type="entry name" value="HELICASE_ATP_BIND_1"/>
    <property type="match status" value="1"/>
</dbReference>
<dbReference type="PROSITE" id="PS51194">
    <property type="entry name" value="HELICASE_CTER"/>
    <property type="match status" value="1"/>
</dbReference>
<gene>
    <name type="primary">ino80</name>
    <name type="ORF">AO090009000631</name>
</gene>
<reference key="1">
    <citation type="journal article" date="2005" name="Nature">
        <title>Genome sequencing and analysis of Aspergillus oryzae.</title>
        <authorList>
            <person name="Machida M."/>
            <person name="Asai K."/>
            <person name="Sano M."/>
            <person name="Tanaka T."/>
            <person name="Kumagai T."/>
            <person name="Terai G."/>
            <person name="Kusumoto K."/>
            <person name="Arima T."/>
            <person name="Akita O."/>
            <person name="Kashiwagi Y."/>
            <person name="Abe K."/>
            <person name="Gomi K."/>
            <person name="Horiuchi H."/>
            <person name="Kitamoto K."/>
            <person name="Kobayashi T."/>
            <person name="Takeuchi M."/>
            <person name="Denning D.W."/>
            <person name="Galagan J.E."/>
            <person name="Nierman W.C."/>
            <person name="Yu J."/>
            <person name="Archer D.B."/>
            <person name="Bennett J.W."/>
            <person name="Bhatnagar D."/>
            <person name="Cleveland T.E."/>
            <person name="Fedorova N.D."/>
            <person name="Gotoh O."/>
            <person name="Horikawa H."/>
            <person name="Hosoyama A."/>
            <person name="Ichinomiya M."/>
            <person name="Igarashi R."/>
            <person name="Iwashita K."/>
            <person name="Juvvadi P.R."/>
            <person name="Kato M."/>
            <person name="Kato Y."/>
            <person name="Kin T."/>
            <person name="Kokubun A."/>
            <person name="Maeda H."/>
            <person name="Maeyama N."/>
            <person name="Maruyama J."/>
            <person name="Nagasaki H."/>
            <person name="Nakajima T."/>
            <person name="Oda K."/>
            <person name="Okada K."/>
            <person name="Paulsen I."/>
            <person name="Sakamoto K."/>
            <person name="Sawano T."/>
            <person name="Takahashi M."/>
            <person name="Takase K."/>
            <person name="Terabayashi Y."/>
            <person name="Wortman J.R."/>
            <person name="Yamada O."/>
            <person name="Yamagata Y."/>
            <person name="Anazawa H."/>
            <person name="Hata Y."/>
            <person name="Koide Y."/>
            <person name="Komori T."/>
            <person name="Koyama Y."/>
            <person name="Minetoki T."/>
            <person name="Suharnan S."/>
            <person name="Tanaka A."/>
            <person name="Isono K."/>
            <person name="Kuhara S."/>
            <person name="Ogasawara N."/>
            <person name="Kikuchi H."/>
        </authorList>
    </citation>
    <scope>NUCLEOTIDE SEQUENCE [LARGE SCALE GENOMIC DNA]</scope>
    <source>
        <strain>ATCC 42149 / RIB 40</strain>
    </source>
</reference>